<reference key="1">
    <citation type="journal article" date="2009" name="J. Bacteriol.">
        <title>The genome of Thermosipho africanus TCF52B: lateral genetic connections to the Firmicutes and Archaea.</title>
        <authorList>
            <person name="Nesboe C.L."/>
            <person name="Bapteste E."/>
            <person name="Curtis B."/>
            <person name="Dahle H."/>
            <person name="Lopez P."/>
            <person name="Macleod D."/>
            <person name="Dlutek M."/>
            <person name="Bowman S."/>
            <person name="Zhaxybayeva O."/>
            <person name="Birkeland N.-K."/>
            <person name="Doolittle W.F."/>
        </authorList>
    </citation>
    <scope>NUCLEOTIDE SEQUENCE [LARGE SCALE GENOMIC DNA]</scope>
    <source>
        <strain>TCF52B</strain>
    </source>
</reference>
<dbReference type="EMBL" id="CP001185">
    <property type="protein sequence ID" value="ACJ75667.1"/>
    <property type="molecule type" value="Genomic_DNA"/>
</dbReference>
<dbReference type="RefSeq" id="WP_004101449.1">
    <property type="nucleotide sequence ID" value="NC_011653.1"/>
</dbReference>
<dbReference type="SMR" id="B7IHV3"/>
<dbReference type="STRING" id="484019.THA_1222"/>
<dbReference type="KEGG" id="taf:THA_1222"/>
<dbReference type="eggNOG" id="COG0197">
    <property type="taxonomic scope" value="Bacteria"/>
</dbReference>
<dbReference type="HOGENOM" id="CLU_078858_2_1_0"/>
<dbReference type="OrthoDB" id="9802589at2"/>
<dbReference type="Proteomes" id="UP000002453">
    <property type="component" value="Chromosome"/>
</dbReference>
<dbReference type="GO" id="GO:0022625">
    <property type="term" value="C:cytosolic large ribosomal subunit"/>
    <property type="evidence" value="ECO:0007669"/>
    <property type="project" value="TreeGrafter"/>
</dbReference>
<dbReference type="GO" id="GO:0019843">
    <property type="term" value="F:rRNA binding"/>
    <property type="evidence" value="ECO:0007669"/>
    <property type="project" value="UniProtKB-UniRule"/>
</dbReference>
<dbReference type="GO" id="GO:0003735">
    <property type="term" value="F:structural constituent of ribosome"/>
    <property type="evidence" value="ECO:0007669"/>
    <property type="project" value="InterPro"/>
</dbReference>
<dbReference type="GO" id="GO:0000049">
    <property type="term" value="F:tRNA binding"/>
    <property type="evidence" value="ECO:0007669"/>
    <property type="project" value="UniProtKB-KW"/>
</dbReference>
<dbReference type="GO" id="GO:0006412">
    <property type="term" value="P:translation"/>
    <property type="evidence" value="ECO:0007669"/>
    <property type="project" value="UniProtKB-UniRule"/>
</dbReference>
<dbReference type="CDD" id="cd01433">
    <property type="entry name" value="Ribosomal_L16_L10e"/>
    <property type="match status" value="1"/>
</dbReference>
<dbReference type="FunFam" id="3.90.1170.10:FF:000001">
    <property type="entry name" value="50S ribosomal protein L16"/>
    <property type="match status" value="1"/>
</dbReference>
<dbReference type="Gene3D" id="3.90.1170.10">
    <property type="entry name" value="Ribosomal protein L10e/L16"/>
    <property type="match status" value="1"/>
</dbReference>
<dbReference type="HAMAP" id="MF_01342">
    <property type="entry name" value="Ribosomal_uL16"/>
    <property type="match status" value="1"/>
</dbReference>
<dbReference type="InterPro" id="IPR047873">
    <property type="entry name" value="Ribosomal_uL16"/>
</dbReference>
<dbReference type="InterPro" id="IPR000114">
    <property type="entry name" value="Ribosomal_uL16_bact-type"/>
</dbReference>
<dbReference type="InterPro" id="IPR020798">
    <property type="entry name" value="Ribosomal_uL16_CS"/>
</dbReference>
<dbReference type="InterPro" id="IPR016180">
    <property type="entry name" value="Ribosomal_uL16_dom"/>
</dbReference>
<dbReference type="InterPro" id="IPR036920">
    <property type="entry name" value="Ribosomal_uL16_sf"/>
</dbReference>
<dbReference type="NCBIfam" id="TIGR01164">
    <property type="entry name" value="rplP_bact"/>
    <property type="match status" value="1"/>
</dbReference>
<dbReference type="PANTHER" id="PTHR12220">
    <property type="entry name" value="50S/60S RIBOSOMAL PROTEIN L16"/>
    <property type="match status" value="1"/>
</dbReference>
<dbReference type="PANTHER" id="PTHR12220:SF13">
    <property type="entry name" value="LARGE RIBOSOMAL SUBUNIT PROTEIN UL16M"/>
    <property type="match status" value="1"/>
</dbReference>
<dbReference type="Pfam" id="PF00252">
    <property type="entry name" value="Ribosomal_L16"/>
    <property type="match status" value="1"/>
</dbReference>
<dbReference type="PRINTS" id="PR00060">
    <property type="entry name" value="RIBOSOMALL16"/>
</dbReference>
<dbReference type="SUPFAM" id="SSF54686">
    <property type="entry name" value="Ribosomal protein L16p/L10e"/>
    <property type="match status" value="1"/>
</dbReference>
<dbReference type="PROSITE" id="PS00586">
    <property type="entry name" value="RIBOSOMAL_L16_1"/>
    <property type="match status" value="1"/>
</dbReference>
<evidence type="ECO:0000255" key="1">
    <source>
        <dbReference type="HAMAP-Rule" id="MF_01342"/>
    </source>
</evidence>
<evidence type="ECO:0000305" key="2"/>
<protein>
    <recommendedName>
        <fullName evidence="1">Large ribosomal subunit protein uL16</fullName>
    </recommendedName>
    <alternativeName>
        <fullName evidence="2">50S ribosomal protein L16</fullName>
    </alternativeName>
</protein>
<feature type="chain" id="PRO_1000143040" description="Large ribosomal subunit protein uL16">
    <location>
        <begin position="1"/>
        <end position="142"/>
    </location>
</feature>
<keyword id="KW-1185">Reference proteome</keyword>
<keyword id="KW-0687">Ribonucleoprotein</keyword>
<keyword id="KW-0689">Ribosomal protein</keyword>
<keyword id="KW-0694">RNA-binding</keyword>
<keyword id="KW-0699">rRNA-binding</keyword>
<keyword id="KW-0820">tRNA-binding</keyword>
<comment type="function">
    <text evidence="1">Binds 23S rRNA and is also seen to make contacts with the A and possibly P site tRNAs.</text>
</comment>
<comment type="subunit">
    <text evidence="1">Part of the 50S ribosomal subunit.</text>
</comment>
<comment type="similarity">
    <text evidence="1">Belongs to the universal ribosomal protein uL16 family.</text>
</comment>
<accession>B7IHV3</accession>
<proteinExistence type="inferred from homology"/>
<gene>
    <name evidence="1" type="primary">rplP</name>
    <name type="ordered locus">THA_1222</name>
</gene>
<name>RL16_THEAB</name>
<organism>
    <name type="scientific">Thermosipho africanus (strain TCF52B)</name>
    <dbReference type="NCBI Taxonomy" id="484019"/>
    <lineage>
        <taxon>Bacteria</taxon>
        <taxon>Thermotogati</taxon>
        <taxon>Thermotogota</taxon>
        <taxon>Thermotogae</taxon>
        <taxon>Thermotogales</taxon>
        <taxon>Fervidobacteriaceae</taxon>
        <taxon>Thermosipho</taxon>
    </lineage>
</organism>
<sequence length="142" mass="15896">MLMPKRVKYRKQHRGRMKGNAKGGALVNFGEYGLKAMESHWITAQQIEACRIAITRTLKKTGKLWIRVFPDKSYTKHPAESKLGKGKGNVEGWVAVVKPGKILFEIGGVDEKLAREALEYAATKLPIRTKIVKRHEIGGEAV</sequence>